<evidence type="ECO:0000250" key="1"/>
<evidence type="ECO:0000255" key="2">
    <source>
        <dbReference type="HAMAP-Rule" id="MF_00403"/>
    </source>
</evidence>
<evidence type="ECO:0000256" key="3">
    <source>
        <dbReference type="SAM" id="MobiDB-lite"/>
    </source>
</evidence>
<evidence type="ECO:0000305" key="4"/>
<gene>
    <name evidence="2" type="primary">rpsL</name>
    <name type="ordered locus">SPT_0316</name>
</gene>
<protein>
    <recommendedName>
        <fullName evidence="2">Small ribosomal subunit protein uS12</fullName>
    </recommendedName>
    <alternativeName>
        <fullName evidence="4">30S ribosomal protein S12</fullName>
    </alternativeName>
</protein>
<feature type="chain" id="PRO_1000194218" description="Small ribosomal subunit protein uS12">
    <location>
        <begin position="1"/>
        <end position="137"/>
    </location>
</feature>
<feature type="region of interest" description="Disordered" evidence="3">
    <location>
        <begin position="1"/>
        <end position="57"/>
    </location>
</feature>
<feature type="modified residue" description="3-methylthioaspartic acid" evidence="1">
    <location>
        <position position="102"/>
    </location>
</feature>
<proteinExistence type="inferred from homology"/>
<sequence length="137" mass="15144">MPTINQLVRKPRKSKVEKSKSPALNVGYNSHKKVQTNVSSPQKRGVATRVGTMTPKKPNSALRKFARVRLSNLIEVTAYIPGIGHNLQEHSVVLLRGGRVKDLPGVRYHIVRGALDTAGVNDRKQGRSKYGTKRPKA</sequence>
<dbReference type="EMBL" id="CP000921">
    <property type="protein sequence ID" value="ACO23747.1"/>
    <property type="molecule type" value="Genomic_DNA"/>
</dbReference>
<dbReference type="RefSeq" id="WP_001142332.1">
    <property type="nucleotide sequence ID" value="NC_012469.1"/>
</dbReference>
<dbReference type="SMR" id="C1CPE3"/>
<dbReference type="GeneID" id="93922571"/>
<dbReference type="KEGG" id="snt:SPT_0316"/>
<dbReference type="HOGENOM" id="CLU_104295_1_2_9"/>
<dbReference type="GO" id="GO:0015935">
    <property type="term" value="C:small ribosomal subunit"/>
    <property type="evidence" value="ECO:0007669"/>
    <property type="project" value="InterPro"/>
</dbReference>
<dbReference type="GO" id="GO:0019843">
    <property type="term" value="F:rRNA binding"/>
    <property type="evidence" value="ECO:0007669"/>
    <property type="project" value="UniProtKB-UniRule"/>
</dbReference>
<dbReference type="GO" id="GO:0003735">
    <property type="term" value="F:structural constituent of ribosome"/>
    <property type="evidence" value="ECO:0007669"/>
    <property type="project" value="InterPro"/>
</dbReference>
<dbReference type="GO" id="GO:0000049">
    <property type="term" value="F:tRNA binding"/>
    <property type="evidence" value="ECO:0007669"/>
    <property type="project" value="UniProtKB-UniRule"/>
</dbReference>
<dbReference type="GO" id="GO:0006412">
    <property type="term" value="P:translation"/>
    <property type="evidence" value="ECO:0007669"/>
    <property type="project" value="UniProtKB-UniRule"/>
</dbReference>
<dbReference type="CDD" id="cd03368">
    <property type="entry name" value="Ribosomal_S12"/>
    <property type="match status" value="1"/>
</dbReference>
<dbReference type="FunFam" id="2.40.50.140:FF:000001">
    <property type="entry name" value="30S ribosomal protein S12"/>
    <property type="match status" value="1"/>
</dbReference>
<dbReference type="Gene3D" id="2.40.50.140">
    <property type="entry name" value="Nucleic acid-binding proteins"/>
    <property type="match status" value="1"/>
</dbReference>
<dbReference type="HAMAP" id="MF_00403_B">
    <property type="entry name" value="Ribosomal_uS12_B"/>
    <property type="match status" value="1"/>
</dbReference>
<dbReference type="InterPro" id="IPR012340">
    <property type="entry name" value="NA-bd_OB-fold"/>
</dbReference>
<dbReference type="InterPro" id="IPR006032">
    <property type="entry name" value="Ribosomal_uS12"/>
</dbReference>
<dbReference type="InterPro" id="IPR005679">
    <property type="entry name" value="Ribosomal_uS12_bac"/>
</dbReference>
<dbReference type="NCBIfam" id="TIGR00981">
    <property type="entry name" value="rpsL_bact"/>
    <property type="match status" value="1"/>
</dbReference>
<dbReference type="PANTHER" id="PTHR11652">
    <property type="entry name" value="30S RIBOSOMAL PROTEIN S12 FAMILY MEMBER"/>
    <property type="match status" value="1"/>
</dbReference>
<dbReference type="Pfam" id="PF00164">
    <property type="entry name" value="Ribosom_S12_S23"/>
    <property type="match status" value="1"/>
</dbReference>
<dbReference type="PIRSF" id="PIRSF002133">
    <property type="entry name" value="Ribosomal_S12/S23"/>
    <property type="match status" value="1"/>
</dbReference>
<dbReference type="PRINTS" id="PR01034">
    <property type="entry name" value="RIBOSOMALS12"/>
</dbReference>
<dbReference type="SUPFAM" id="SSF50249">
    <property type="entry name" value="Nucleic acid-binding proteins"/>
    <property type="match status" value="1"/>
</dbReference>
<dbReference type="PROSITE" id="PS00055">
    <property type="entry name" value="RIBOSOMAL_S12"/>
    <property type="match status" value="1"/>
</dbReference>
<organism>
    <name type="scientific">Streptococcus pneumoniae (strain Taiwan19F-14)</name>
    <dbReference type="NCBI Taxonomy" id="487213"/>
    <lineage>
        <taxon>Bacteria</taxon>
        <taxon>Bacillati</taxon>
        <taxon>Bacillota</taxon>
        <taxon>Bacilli</taxon>
        <taxon>Lactobacillales</taxon>
        <taxon>Streptococcaceae</taxon>
        <taxon>Streptococcus</taxon>
    </lineage>
</organism>
<name>RS12_STRZT</name>
<accession>C1CPE3</accession>
<keyword id="KW-0488">Methylation</keyword>
<keyword id="KW-0687">Ribonucleoprotein</keyword>
<keyword id="KW-0689">Ribosomal protein</keyword>
<keyword id="KW-0694">RNA-binding</keyword>
<keyword id="KW-0699">rRNA-binding</keyword>
<keyword id="KW-0820">tRNA-binding</keyword>
<reference key="1">
    <citation type="journal article" date="2010" name="Genome Biol.">
        <title>Structure and dynamics of the pan-genome of Streptococcus pneumoniae and closely related species.</title>
        <authorList>
            <person name="Donati C."/>
            <person name="Hiller N.L."/>
            <person name="Tettelin H."/>
            <person name="Muzzi A."/>
            <person name="Croucher N.J."/>
            <person name="Angiuoli S.V."/>
            <person name="Oggioni M."/>
            <person name="Dunning Hotopp J.C."/>
            <person name="Hu F.Z."/>
            <person name="Riley D.R."/>
            <person name="Covacci A."/>
            <person name="Mitchell T.J."/>
            <person name="Bentley S.D."/>
            <person name="Kilian M."/>
            <person name="Ehrlich G.D."/>
            <person name="Rappuoli R."/>
            <person name="Moxon E.R."/>
            <person name="Masignani V."/>
        </authorList>
    </citation>
    <scope>NUCLEOTIDE SEQUENCE [LARGE SCALE GENOMIC DNA]</scope>
    <source>
        <strain>Taiwan19F-14</strain>
    </source>
</reference>
<comment type="function">
    <text evidence="2">With S4 and S5 plays an important role in translational accuracy.</text>
</comment>
<comment type="function">
    <text evidence="2">Interacts with and stabilizes bases of the 16S rRNA that are involved in tRNA selection in the A site and with the mRNA backbone. Located at the interface of the 30S and 50S subunits, it traverses the body of the 30S subunit contacting proteins on the other side and probably holding the rRNA structure together. The combined cluster of proteins S8, S12 and S17 appears to hold together the shoulder and platform of the 30S subunit.</text>
</comment>
<comment type="subunit">
    <text evidence="2">Part of the 30S ribosomal subunit. Contacts proteins S8 and S17. May interact with IF1 in the 30S initiation complex.</text>
</comment>
<comment type="similarity">
    <text evidence="2">Belongs to the universal ribosomal protein uS12 family.</text>
</comment>